<gene>
    <name evidence="1" type="primary">recF</name>
    <name type="ordered locus">tll2444</name>
</gene>
<name>RECF_THEVB</name>
<dbReference type="EMBL" id="BA000039">
    <property type="protein sequence ID" value="BAC09996.1"/>
    <property type="molecule type" value="Genomic_DNA"/>
</dbReference>
<dbReference type="RefSeq" id="NP_683234.1">
    <property type="nucleotide sequence ID" value="NC_004113.1"/>
</dbReference>
<dbReference type="RefSeq" id="WP_011058276.1">
    <property type="nucleotide sequence ID" value="NC_004113.1"/>
</dbReference>
<dbReference type="SMR" id="Q8DG79"/>
<dbReference type="STRING" id="197221.gene:10749065"/>
<dbReference type="EnsemblBacteria" id="BAC09996">
    <property type="protein sequence ID" value="BAC09996"/>
    <property type="gene ID" value="BAC09996"/>
</dbReference>
<dbReference type="KEGG" id="tel:tll2444"/>
<dbReference type="PATRIC" id="fig|197221.4.peg.2568"/>
<dbReference type="eggNOG" id="COG1195">
    <property type="taxonomic scope" value="Bacteria"/>
</dbReference>
<dbReference type="Proteomes" id="UP000000440">
    <property type="component" value="Chromosome"/>
</dbReference>
<dbReference type="GO" id="GO:0005737">
    <property type="term" value="C:cytoplasm"/>
    <property type="evidence" value="ECO:0007669"/>
    <property type="project" value="UniProtKB-SubCell"/>
</dbReference>
<dbReference type="GO" id="GO:0005524">
    <property type="term" value="F:ATP binding"/>
    <property type="evidence" value="ECO:0007669"/>
    <property type="project" value="UniProtKB-UniRule"/>
</dbReference>
<dbReference type="GO" id="GO:0003697">
    <property type="term" value="F:single-stranded DNA binding"/>
    <property type="evidence" value="ECO:0007669"/>
    <property type="project" value="UniProtKB-UniRule"/>
</dbReference>
<dbReference type="GO" id="GO:0006260">
    <property type="term" value="P:DNA replication"/>
    <property type="evidence" value="ECO:0007669"/>
    <property type="project" value="UniProtKB-UniRule"/>
</dbReference>
<dbReference type="GO" id="GO:0000731">
    <property type="term" value="P:DNA synthesis involved in DNA repair"/>
    <property type="evidence" value="ECO:0007669"/>
    <property type="project" value="TreeGrafter"/>
</dbReference>
<dbReference type="GO" id="GO:0006302">
    <property type="term" value="P:double-strand break repair"/>
    <property type="evidence" value="ECO:0007669"/>
    <property type="project" value="TreeGrafter"/>
</dbReference>
<dbReference type="GO" id="GO:0009432">
    <property type="term" value="P:SOS response"/>
    <property type="evidence" value="ECO:0007669"/>
    <property type="project" value="UniProtKB-UniRule"/>
</dbReference>
<dbReference type="CDD" id="cd03242">
    <property type="entry name" value="ABC_RecF"/>
    <property type="match status" value="1"/>
</dbReference>
<dbReference type="Gene3D" id="3.40.50.300">
    <property type="entry name" value="P-loop containing nucleotide triphosphate hydrolases"/>
    <property type="match status" value="1"/>
</dbReference>
<dbReference type="Gene3D" id="1.20.1050.90">
    <property type="entry name" value="RecF/RecN/SMC, N-terminal domain"/>
    <property type="match status" value="1"/>
</dbReference>
<dbReference type="HAMAP" id="MF_00365">
    <property type="entry name" value="RecF"/>
    <property type="match status" value="1"/>
</dbReference>
<dbReference type="InterPro" id="IPR001238">
    <property type="entry name" value="DNA-binding_RecF"/>
</dbReference>
<dbReference type="InterPro" id="IPR018078">
    <property type="entry name" value="DNA-binding_RecF_CS"/>
</dbReference>
<dbReference type="InterPro" id="IPR027417">
    <property type="entry name" value="P-loop_NTPase"/>
</dbReference>
<dbReference type="InterPro" id="IPR003395">
    <property type="entry name" value="RecF/RecN/SMC_N"/>
</dbReference>
<dbReference type="InterPro" id="IPR042174">
    <property type="entry name" value="RecF_2"/>
</dbReference>
<dbReference type="NCBIfam" id="TIGR00611">
    <property type="entry name" value="recf"/>
    <property type="match status" value="1"/>
</dbReference>
<dbReference type="PANTHER" id="PTHR32182">
    <property type="entry name" value="DNA REPLICATION AND REPAIR PROTEIN RECF"/>
    <property type="match status" value="1"/>
</dbReference>
<dbReference type="PANTHER" id="PTHR32182:SF0">
    <property type="entry name" value="DNA REPLICATION AND REPAIR PROTEIN RECF"/>
    <property type="match status" value="1"/>
</dbReference>
<dbReference type="Pfam" id="PF02463">
    <property type="entry name" value="SMC_N"/>
    <property type="match status" value="1"/>
</dbReference>
<dbReference type="SUPFAM" id="SSF52540">
    <property type="entry name" value="P-loop containing nucleoside triphosphate hydrolases"/>
    <property type="match status" value="1"/>
</dbReference>
<dbReference type="PROSITE" id="PS00617">
    <property type="entry name" value="RECF_1"/>
    <property type="match status" value="1"/>
</dbReference>
<dbReference type="PROSITE" id="PS00618">
    <property type="entry name" value="RECF_2"/>
    <property type="match status" value="1"/>
</dbReference>
<reference key="1">
    <citation type="journal article" date="2002" name="DNA Res.">
        <title>Complete genome structure of the thermophilic cyanobacterium Thermosynechococcus elongatus BP-1.</title>
        <authorList>
            <person name="Nakamura Y."/>
            <person name="Kaneko T."/>
            <person name="Sato S."/>
            <person name="Ikeuchi M."/>
            <person name="Katoh H."/>
            <person name="Sasamoto S."/>
            <person name="Watanabe A."/>
            <person name="Iriguchi M."/>
            <person name="Kawashima K."/>
            <person name="Kimura T."/>
            <person name="Kishida Y."/>
            <person name="Kiyokawa C."/>
            <person name="Kohara M."/>
            <person name="Matsumoto M."/>
            <person name="Matsuno A."/>
            <person name="Nakazaki N."/>
            <person name="Shimpo S."/>
            <person name="Sugimoto M."/>
            <person name="Takeuchi C."/>
            <person name="Yamada M."/>
            <person name="Tabata S."/>
        </authorList>
    </citation>
    <scope>NUCLEOTIDE SEQUENCE [LARGE SCALE GENOMIC DNA]</scope>
    <source>
        <strain>NIES-2133 / IAM M-273 / BP-1</strain>
    </source>
</reference>
<evidence type="ECO:0000255" key="1">
    <source>
        <dbReference type="HAMAP-Rule" id="MF_00365"/>
    </source>
</evidence>
<comment type="function">
    <text evidence="1">The RecF protein is involved in DNA metabolism; it is required for DNA replication and normal SOS inducibility. RecF binds preferentially to single-stranded, linear DNA. It also seems to bind ATP.</text>
</comment>
<comment type="subcellular location">
    <subcellularLocation>
        <location evidence="1">Cytoplasm</location>
    </subcellularLocation>
</comment>
<comment type="similarity">
    <text evidence="1">Belongs to the RecF family.</text>
</comment>
<proteinExistence type="inferred from homology"/>
<sequence length="379" mass="42360">MFLKSLHLRHFRNYSEQSVTFAAPKTILVGDNAQGKSNLLEAVEWLATLQSHRTHRDRDLIQQGHESAQIEATLERQGVPLDLAVSLRPSSGRVLRVNGCTVKRTADFLGQLNAVEFSCLDLELVRGTPAIRRNWLDRILLQLEPLYSQLLQTYQKALRQRNALLKQAGSQGWDEALWQAWNQQLVINGTRIIRRRQRLIERLAPLAQDWHRVLSGDRETLTLSYESHVPLGDGTSEAIVAAFSEALATRRAIEFLQKTSLVGPHRDDVGFCLNAQSARQFASQGQQRTLVLALKLAELALVESVVGDTPLLLLDDVLAELDLQRQGILLEVMGDRYQTLMTTTHLAPFAAPWRQQAQILKVTAGTIASVSDTAAQTSD</sequence>
<organism>
    <name type="scientific">Thermosynechococcus vestitus (strain NIES-2133 / IAM M-273 / BP-1)</name>
    <dbReference type="NCBI Taxonomy" id="197221"/>
    <lineage>
        <taxon>Bacteria</taxon>
        <taxon>Bacillati</taxon>
        <taxon>Cyanobacteriota</taxon>
        <taxon>Cyanophyceae</taxon>
        <taxon>Acaryochloridales</taxon>
        <taxon>Thermosynechococcaceae</taxon>
        <taxon>Thermosynechococcus</taxon>
    </lineage>
</organism>
<feature type="chain" id="PRO_0000196478" description="DNA replication and repair protein RecF">
    <location>
        <begin position="1"/>
        <end position="379"/>
    </location>
</feature>
<feature type="binding site" evidence="1">
    <location>
        <begin position="30"/>
        <end position="37"/>
    </location>
    <ligand>
        <name>ATP</name>
        <dbReference type="ChEBI" id="CHEBI:30616"/>
    </ligand>
</feature>
<accession>Q8DG79</accession>
<protein>
    <recommendedName>
        <fullName evidence="1">DNA replication and repair protein RecF</fullName>
    </recommendedName>
</protein>
<keyword id="KW-0067">ATP-binding</keyword>
<keyword id="KW-0963">Cytoplasm</keyword>
<keyword id="KW-0227">DNA damage</keyword>
<keyword id="KW-0234">DNA repair</keyword>
<keyword id="KW-0235">DNA replication</keyword>
<keyword id="KW-0238">DNA-binding</keyword>
<keyword id="KW-0547">Nucleotide-binding</keyword>
<keyword id="KW-1185">Reference proteome</keyword>
<keyword id="KW-0742">SOS response</keyword>